<reference key="1">
    <citation type="journal article" date="2001" name="Gene">
        <title>Identification of a new multigene four-transmembrane family (MS4A) related to CD20, HTm4 and beta subunit of the high-affinity IgE receptor.</title>
        <authorList>
            <person name="Ishibashi K."/>
            <person name="Suzuki M."/>
            <person name="Sasaki S."/>
            <person name="Imai M."/>
        </authorList>
    </citation>
    <scope>NUCLEOTIDE SEQUENCE [MRNA]</scope>
</reference>
<reference key="2">
    <citation type="journal article" date="2001" name="Genomics">
        <title>Identification of a CD20-, Fc-epsilon-RI-beta-, and HTm4-related gene family: sixteen new MS4A family members expressed in human and mouse.</title>
        <authorList>
            <person name="Liang Y."/>
            <person name="Tedder T.F."/>
        </authorList>
    </citation>
    <scope>NUCLEOTIDE SEQUENCE [MRNA]</scope>
</reference>
<reference key="3">
    <citation type="journal article" date="2001" name="Biochem. Biophys. Res. Commun.">
        <title>Isolation, tissue distribution, and chromosomal localization of a novel testis-specific human four-transmembrane gene related to CD20 and Fc-epsilon-RI-beta.</title>
        <authorList>
            <person name="Hulett M.D."/>
            <person name="Pagler E."/>
            <person name="Hornby J.R."/>
            <person name="Hogarth P.M."/>
            <person name="Eyre H.J."/>
            <person name="Baker E."/>
            <person name="Crawford J."/>
            <person name="Sutherland G.R."/>
            <person name="Ohms S.J."/>
            <person name="Parish C.R."/>
        </authorList>
    </citation>
    <scope>NUCLEOTIDE SEQUENCE [MRNA]</scope>
</reference>
<reference key="4">
    <citation type="journal article" date="2004" name="Genome Res.">
        <title>The status, quality, and expansion of the NIH full-length cDNA project: the Mammalian Gene Collection (MGC).</title>
        <authorList>
            <consortium name="The MGC Project Team"/>
        </authorList>
    </citation>
    <scope>NUCLEOTIDE SEQUENCE [LARGE SCALE MRNA]</scope>
    <source>
        <tissue>Brain</tissue>
    </source>
</reference>
<reference key="5">
    <citation type="journal article" date="2006" name="Science">
        <title>The consensus coding sequences of human breast and colorectal cancers.</title>
        <authorList>
            <person name="Sjoeblom T."/>
            <person name="Jones S."/>
            <person name="Wood L.D."/>
            <person name="Parsons D.W."/>
            <person name="Lin J."/>
            <person name="Barber T.D."/>
            <person name="Mandelker D."/>
            <person name="Leary R.J."/>
            <person name="Ptak J."/>
            <person name="Silliman N."/>
            <person name="Szabo S."/>
            <person name="Buckhaults P."/>
            <person name="Farrell C."/>
            <person name="Meeh P."/>
            <person name="Markowitz S.D."/>
            <person name="Willis J."/>
            <person name="Dawson D."/>
            <person name="Willson J.K.V."/>
            <person name="Gazdar A.F."/>
            <person name="Hartigan J."/>
            <person name="Wu L."/>
            <person name="Liu C."/>
            <person name="Parmigiani G."/>
            <person name="Park B.H."/>
            <person name="Bachman K.E."/>
            <person name="Papadopoulos N."/>
            <person name="Vogelstein B."/>
            <person name="Kinzler K.W."/>
            <person name="Velculescu V.E."/>
        </authorList>
    </citation>
    <scope>VARIANT [LARGE SCALE ANALYSIS] ARG-123</scope>
</reference>
<comment type="function">
    <text>May be involved in signal transduction as a component of a multimeric receptor complex.</text>
</comment>
<comment type="subcellular location">
    <subcellularLocation>
        <location>Membrane</location>
        <topology>Multi-pass membrane protein</topology>
    </subcellularLocation>
</comment>
<comment type="tissue specificity">
    <text>Expressed at high level in the testis. Detected also in the pancreas, heart and in the brain.</text>
</comment>
<comment type="similarity">
    <text evidence="3">Belongs to the MS4A family.</text>
</comment>
<evidence type="ECO:0000255" key="1"/>
<evidence type="ECO:0000269" key="2">
    <source>
    </source>
</evidence>
<evidence type="ECO:0000305" key="3"/>
<accession>Q9H3V2</accession>
<accession>Q9BZH1</accession>
<keyword id="KW-0472">Membrane</keyword>
<keyword id="KW-0675">Receptor</keyword>
<keyword id="KW-1185">Reference proteome</keyword>
<keyword id="KW-0812">Transmembrane</keyword>
<keyword id="KW-1133">Transmembrane helix</keyword>
<name>MS4A5_HUMAN</name>
<protein>
    <recommendedName>
        <fullName>Membrane-spanning 4-domains subfamily A member 5</fullName>
    </recommendedName>
    <alternativeName>
        <fullName>CD20 antigen-like 2</fullName>
    </alternativeName>
    <alternativeName>
        <fullName>Testis-expressed transmembrane protein 4</fullName>
    </alternativeName>
</protein>
<proteinExistence type="evidence at transcript level"/>
<dbReference type="EMBL" id="AB013103">
    <property type="protein sequence ID" value="BAB18739.1"/>
    <property type="molecule type" value="mRNA"/>
</dbReference>
<dbReference type="EMBL" id="AF237907">
    <property type="protein sequence ID" value="AAK37416.1"/>
    <property type="molecule type" value="mRNA"/>
</dbReference>
<dbReference type="EMBL" id="AF321127">
    <property type="protein sequence ID" value="AAK01641.1"/>
    <property type="molecule type" value="mRNA"/>
</dbReference>
<dbReference type="EMBL" id="BC029884">
    <property type="protein sequence ID" value="AAH29884.1"/>
    <property type="molecule type" value="mRNA"/>
</dbReference>
<dbReference type="CCDS" id="CCDS7987.1"/>
<dbReference type="PIR" id="JC7585">
    <property type="entry name" value="JC7585"/>
</dbReference>
<dbReference type="RefSeq" id="NP_076434.2">
    <property type="nucleotide sequence ID" value="NM_023945.2"/>
</dbReference>
<dbReference type="SMR" id="Q9H3V2"/>
<dbReference type="BioGRID" id="122120">
    <property type="interactions" value="1"/>
</dbReference>
<dbReference type="FunCoup" id="Q9H3V2">
    <property type="interactions" value="223"/>
</dbReference>
<dbReference type="IntAct" id="Q9H3V2">
    <property type="interactions" value="1"/>
</dbReference>
<dbReference type="STRING" id="9606.ENSP00000300190"/>
<dbReference type="BioMuta" id="MS4A5"/>
<dbReference type="DMDM" id="29611830"/>
<dbReference type="MassIVE" id="Q9H3V2"/>
<dbReference type="PaxDb" id="9606-ENSP00000300190"/>
<dbReference type="PeptideAtlas" id="Q9H3V2"/>
<dbReference type="ProteomicsDB" id="80765"/>
<dbReference type="Antibodypedia" id="27921">
    <property type="antibodies" value="72 antibodies from 13 providers"/>
</dbReference>
<dbReference type="DNASU" id="64232"/>
<dbReference type="Ensembl" id="ENST00000300190.7">
    <property type="protein sequence ID" value="ENSP00000300190.2"/>
    <property type="gene ID" value="ENSG00000166930.7"/>
</dbReference>
<dbReference type="GeneID" id="64232"/>
<dbReference type="KEGG" id="hsa:64232"/>
<dbReference type="MANE-Select" id="ENST00000300190.7">
    <property type="protein sequence ID" value="ENSP00000300190.2"/>
    <property type="RefSeq nucleotide sequence ID" value="NM_023945.3"/>
    <property type="RefSeq protein sequence ID" value="NP_076434.2"/>
</dbReference>
<dbReference type="UCSC" id="uc001npo.3">
    <property type="organism name" value="human"/>
</dbReference>
<dbReference type="AGR" id="HGNC:13374"/>
<dbReference type="CTD" id="64232"/>
<dbReference type="DisGeNET" id="64232"/>
<dbReference type="GeneCards" id="MS4A5"/>
<dbReference type="HGNC" id="HGNC:13374">
    <property type="gene designation" value="MS4A5"/>
</dbReference>
<dbReference type="HPA" id="ENSG00000166930">
    <property type="expression patterns" value="Tissue enriched (testis)"/>
</dbReference>
<dbReference type="MIM" id="606499">
    <property type="type" value="gene"/>
</dbReference>
<dbReference type="neXtProt" id="NX_Q9H3V2"/>
<dbReference type="OpenTargets" id="ENSG00000166930"/>
<dbReference type="PharmGKB" id="PA31118"/>
<dbReference type="VEuPathDB" id="HostDB:ENSG00000166930"/>
<dbReference type="eggNOG" id="ENOG502RR0Z">
    <property type="taxonomic scope" value="Eukaryota"/>
</dbReference>
<dbReference type="GeneTree" id="ENSGT00940000162612"/>
<dbReference type="HOGENOM" id="CLU_091032_5_0_1"/>
<dbReference type="InParanoid" id="Q9H3V2"/>
<dbReference type="OMA" id="LFGVMNF"/>
<dbReference type="OrthoDB" id="10071849at2759"/>
<dbReference type="PAN-GO" id="Q9H3V2">
    <property type="GO annotations" value="1 GO annotation based on evolutionary models"/>
</dbReference>
<dbReference type="PhylomeDB" id="Q9H3V2"/>
<dbReference type="TreeFam" id="TF335157"/>
<dbReference type="PathwayCommons" id="Q9H3V2"/>
<dbReference type="SignaLink" id="Q9H3V2"/>
<dbReference type="BioGRID-ORCS" id="64232">
    <property type="hits" value="18 hits in 1126 CRISPR screens"/>
</dbReference>
<dbReference type="GenomeRNAi" id="64232"/>
<dbReference type="Pharos" id="Q9H3V2">
    <property type="development level" value="Tdark"/>
</dbReference>
<dbReference type="PRO" id="PR:Q9H3V2"/>
<dbReference type="Proteomes" id="UP000005640">
    <property type="component" value="Chromosome 11"/>
</dbReference>
<dbReference type="RNAct" id="Q9H3V2">
    <property type="molecule type" value="protein"/>
</dbReference>
<dbReference type="Bgee" id="ENSG00000166930">
    <property type="expression patterns" value="Expressed in sperm and 93 other cell types or tissues"/>
</dbReference>
<dbReference type="ExpressionAtlas" id="Q9H3V2">
    <property type="expression patterns" value="baseline and differential"/>
</dbReference>
<dbReference type="GO" id="GO:0005886">
    <property type="term" value="C:plasma membrane"/>
    <property type="evidence" value="ECO:0000318"/>
    <property type="project" value="GO_Central"/>
</dbReference>
<dbReference type="GO" id="GO:0007166">
    <property type="term" value="P:cell surface receptor signaling pathway"/>
    <property type="evidence" value="ECO:0000318"/>
    <property type="project" value="GO_Central"/>
</dbReference>
<dbReference type="InterPro" id="IPR007237">
    <property type="entry name" value="CD20-like"/>
</dbReference>
<dbReference type="InterPro" id="IPR030417">
    <property type="entry name" value="MS4A"/>
</dbReference>
<dbReference type="PANTHER" id="PTHR23320:SF54">
    <property type="entry name" value="MEMBRANE-SPANNING 4-DOMAINS SUBFAMILY A MEMBER 5"/>
    <property type="match status" value="1"/>
</dbReference>
<dbReference type="PANTHER" id="PTHR23320">
    <property type="entry name" value="MEMBRANE-SPANNING 4-DOMAINS SUBFAMILY A MS4A -RELATED"/>
    <property type="match status" value="1"/>
</dbReference>
<dbReference type="Pfam" id="PF04103">
    <property type="entry name" value="CD20"/>
    <property type="match status" value="1"/>
</dbReference>
<organism>
    <name type="scientific">Homo sapiens</name>
    <name type="common">Human</name>
    <dbReference type="NCBI Taxonomy" id="9606"/>
    <lineage>
        <taxon>Eukaryota</taxon>
        <taxon>Metazoa</taxon>
        <taxon>Chordata</taxon>
        <taxon>Craniata</taxon>
        <taxon>Vertebrata</taxon>
        <taxon>Euteleostomi</taxon>
        <taxon>Mammalia</taxon>
        <taxon>Eutheria</taxon>
        <taxon>Euarchontoglires</taxon>
        <taxon>Primates</taxon>
        <taxon>Haplorrhini</taxon>
        <taxon>Catarrhini</taxon>
        <taxon>Hominidae</taxon>
        <taxon>Homo</taxon>
    </lineage>
</organism>
<gene>
    <name type="primary">MS4A5</name>
    <name type="synonym">CD20L2</name>
    <name type="synonym">TETM4</name>
</gene>
<feature type="chain" id="PRO_0000158637" description="Membrane-spanning 4-domains subfamily A member 5">
    <location>
        <begin position="1"/>
        <end position="200"/>
    </location>
</feature>
<feature type="topological domain" description="Cytoplasmic" evidence="1">
    <location>
        <begin position="1"/>
        <end position="52"/>
    </location>
</feature>
<feature type="transmembrane region" description="Helical" evidence="1">
    <location>
        <begin position="53"/>
        <end position="73"/>
    </location>
</feature>
<feature type="topological domain" description="Extracellular" evidence="1">
    <location>
        <begin position="74"/>
        <end position="80"/>
    </location>
</feature>
<feature type="transmembrane region" description="Helical" evidence="1">
    <location>
        <begin position="81"/>
        <end position="101"/>
    </location>
</feature>
<feature type="topological domain" description="Cytoplasmic" evidence="1">
    <location>
        <begin position="102"/>
        <end position="120"/>
    </location>
</feature>
<feature type="transmembrane region" description="Helical" evidence="1">
    <location>
        <begin position="121"/>
        <end position="141"/>
    </location>
</feature>
<feature type="topological domain" description="Extracellular" evidence="1">
    <location>
        <begin position="142"/>
        <end position="159"/>
    </location>
</feature>
<feature type="transmembrane region" description="Helical" evidence="1">
    <location>
        <begin position="160"/>
        <end position="180"/>
    </location>
</feature>
<feature type="topological domain" description="Cytoplasmic" evidence="1">
    <location>
        <begin position="181"/>
        <end position="200"/>
    </location>
</feature>
<feature type="sequence variant" id="VAR_036402" description="In a colorectal cancer sample; somatic mutation; dbSNP:rs2086064124." evidence="2">
    <original>L</original>
    <variation>R</variation>
    <location>
        <position position="123"/>
    </location>
</feature>
<feature type="sequence conflict" description="In Ref. 3; AAK01641." evidence="3" ref="3">
    <original>F</original>
    <variation>L</variation>
    <location>
        <position position="163"/>
    </location>
</feature>
<sequence>MDSSTAHSPVFLVFPPEITASEYESTELSATTFSTQSPLQKLFARKMKILGTIQILFGIMTFSFGVIFLFTLLKPYPRFPFIFLSGYPFWGSVLFINSGAFLIAVKRKTTETLIILSRIMNFLSALGAIAGIILLTFGFILDQNYICGYSHQNSQCKAVTVLFLGILITLMTFSIIELFISLPFSILGCHSEDCDCEQCC</sequence>